<feature type="chain" id="PRO_0000333904" description="Cell division protein ZapB">
    <location>
        <begin position="1"/>
        <end position="72"/>
    </location>
</feature>
<feature type="coiled-coil region" evidence="1">
    <location>
        <begin position="1"/>
        <end position="71"/>
    </location>
</feature>
<evidence type="ECO:0000255" key="1">
    <source>
        <dbReference type="HAMAP-Rule" id="MF_01196"/>
    </source>
</evidence>
<reference key="1">
    <citation type="journal article" date="2005" name="J. Bacteriol.">
        <title>Genomic sequence of an otitis media isolate of nontypeable Haemophilus influenzae: comparative study with H. influenzae serotype d, strain KW20.</title>
        <authorList>
            <person name="Harrison A."/>
            <person name="Dyer D.W."/>
            <person name="Gillaspy A."/>
            <person name="Ray W.C."/>
            <person name="Mungur R."/>
            <person name="Carson M.B."/>
            <person name="Zhong H."/>
            <person name="Gipson J."/>
            <person name="Gipson M."/>
            <person name="Johnson L.S."/>
            <person name="Lewis L."/>
            <person name="Bakaletz L.O."/>
            <person name="Munson R.S. Jr."/>
        </authorList>
    </citation>
    <scope>NUCLEOTIDE SEQUENCE [LARGE SCALE GENOMIC DNA]</scope>
    <source>
        <strain>86-028NP</strain>
    </source>
</reference>
<protein>
    <recommendedName>
        <fullName evidence="1">Cell division protein ZapB</fullName>
    </recommendedName>
</protein>
<keyword id="KW-0131">Cell cycle</keyword>
<keyword id="KW-0132">Cell division</keyword>
<keyword id="KW-0175">Coiled coil</keyword>
<keyword id="KW-0963">Cytoplasm</keyword>
<keyword id="KW-0717">Septation</keyword>
<organism>
    <name type="scientific">Haemophilus influenzae (strain 86-028NP)</name>
    <dbReference type="NCBI Taxonomy" id="281310"/>
    <lineage>
        <taxon>Bacteria</taxon>
        <taxon>Pseudomonadati</taxon>
        <taxon>Pseudomonadota</taxon>
        <taxon>Gammaproteobacteria</taxon>
        <taxon>Pasteurellales</taxon>
        <taxon>Pasteurellaceae</taxon>
        <taxon>Haemophilus</taxon>
    </lineage>
</organism>
<comment type="function">
    <text evidence="1">Non-essential, abundant cell division factor that is required for proper Z-ring formation. It is recruited early to the divisome by direct interaction with FtsZ, stimulating Z-ring assembly and thereby promoting cell division earlier in the cell cycle. Its recruitment to the Z-ring requires functional FtsA or ZipA.</text>
</comment>
<comment type="subunit">
    <text evidence="1">Homodimer. The ends of the coiled-coil dimer bind to each other, forming polymers. Interacts with FtsZ.</text>
</comment>
<comment type="subcellular location">
    <subcellularLocation>
        <location>Cytoplasm</location>
    </subcellularLocation>
    <text evidence="1">Localizes to the septum at mid-cell, in a FtsZ-like pattern.</text>
</comment>
<comment type="similarity">
    <text evidence="1">Belongs to the ZapB family.</text>
</comment>
<proteinExistence type="inferred from homology"/>
<accession>Q4QMP8</accession>
<sequence>MSLEILDQLEEKIKQAVETIQLLQLEVEELKEKNAESQRNIENLQTENEQLKNEHRNWQEHIRSLLGKFDNV</sequence>
<name>ZAPB_HAEI8</name>
<gene>
    <name evidence="1" type="primary">zapB</name>
    <name type="ordered locus">NTHI0790</name>
</gene>
<dbReference type="EMBL" id="CP000057">
    <property type="protein sequence ID" value="AAX87699.1"/>
    <property type="molecule type" value="Genomic_DNA"/>
</dbReference>
<dbReference type="RefSeq" id="WP_005650820.1">
    <property type="nucleotide sequence ID" value="NC_007146.2"/>
</dbReference>
<dbReference type="SMR" id="Q4QMP8"/>
<dbReference type="KEGG" id="hit:NTHI0790"/>
<dbReference type="HOGENOM" id="CLU_171174_2_0_6"/>
<dbReference type="Proteomes" id="UP000002525">
    <property type="component" value="Chromosome"/>
</dbReference>
<dbReference type="GO" id="GO:0005737">
    <property type="term" value="C:cytoplasm"/>
    <property type="evidence" value="ECO:0007669"/>
    <property type="project" value="UniProtKB-SubCell"/>
</dbReference>
<dbReference type="GO" id="GO:0000917">
    <property type="term" value="P:division septum assembly"/>
    <property type="evidence" value="ECO:0007669"/>
    <property type="project" value="UniProtKB-KW"/>
</dbReference>
<dbReference type="GO" id="GO:0043093">
    <property type="term" value="P:FtsZ-dependent cytokinesis"/>
    <property type="evidence" value="ECO:0007669"/>
    <property type="project" value="UniProtKB-UniRule"/>
</dbReference>
<dbReference type="Gene3D" id="1.20.5.340">
    <property type="match status" value="1"/>
</dbReference>
<dbReference type="HAMAP" id="MF_01196">
    <property type="entry name" value="ZapB"/>
    <property type="match status" value="1"/>
</dbReference>
<dbReference type="InterPro" id="IPR009252">
    <property type="entry name" value="Cell_div_ZapB"/>
</dbReference>
<dbReference type="Pfam" id="PF06005">
    <property type="entry name" value="ZapB"/>
    <property type="match status" value="1"/>
</dbReference>